<feature type="initiator methionine" description="Removed; by host" evidence="1">
    <location>
        <position position="1"/>
    </location>
</feature>
<feature type="chain" id="PRO_0000085244" description="Protein Nef">
    <location>
        <begin position="2"/>
        <end position="262"/>
    </location>
</feature>
<feature type="region of interest" description="Acidic">
    <location>
        <begin position="88"/>
        <end position="96"/>
    </location>
</feature>
<feature type="region of interest" description="Mediates dimerization" evidence="1">
    <location>
        <begin position="140"/>
        <end position="156"/>
    </location>
</feature>
<feature type="lipid moiety-binding region" description="N-myristoyl glycine; by host" evidence="1">
    <location>
        <position position="2"/>
    </location>
</feature>
<sequence>MGGAISKKRSKPPRDLRQRLLRARGENYGRLFKGVEDGSSQSLGGLDKGLSSLSCEGQKYNQGEYMNTPWRNPAEERKKLPYRKQNIDDIDEEDDDLVGIPVEARVPLRTMSYKLAIDMSHFIKEKGGLEGIYYSARRHRILDIYLEKEEGIIPDWQIHSGPGIRYLKMFGWLWKLIPVNVSDEAQEDEEHYLVHPAQTSQWDDPWGEVLAWKFDPTLAYTYEAYIRYPEEFGSKSGLSEKEVKRRLAARGLLEMADRKETS</sequence>
<gene>
    <name type="primary">nef</name>
</gene>
<evidence type="ECO:0000250" key="1"/>
<evidence type="ECO:0000305" key="2"/>
<organismHost>
    <name type="scientific">Cercopithecidae</name>
    <name type="common">Old World monkeys</name>
    <dbReference type="NCBI Taxonomy" id="9527"/>
</organismHost>
<protein>
    <recommendedName>
        <fullName>Protein Nef</fullName>
    </recommendedName>
    <alternativeName>
        <fullName>3'ORF</fullName>
    </alternativeName>
    <alternativeName>
        <fullName>Negative factor</fullName>
        <shortName>F-protein</shortName>
    </alternativeName>
</protein>
<proteinExistence type="inferred from homology"/>
<dbReference type="EMBL" id="Y00277">
    <property type="protein sequence ID" value="CAA68389.1"/>
    <property type="molecule type" value="Genomic_DNA"/>
</dbReference>
<dbReference type="SMR" id="P05862"/>
<dbReference type="Proteomes" id="UP000007220">
    <property type="component" value="Segment"/>
</dbReference>
<dbReference type="GO" id="GO:0020002">
    <property type="term" value="C:host cell plasma membrane"/>
    <property type="evidence" value="ECO:0007669"/>
    <property type="project" value="UniProtKB-SubCell"/>
</dbReference>
<dbReference type="GO" id="GO:0016020">
    <property type="term" value="C:membrane"/>
    <property type="evidence" value="ECO:0007669"/>
    <property type="project" value="UniProtKB-KW"/>
</dbReference>
<dbReference type="GO" id="GO:0005525">
    <property type="term" value="F:GTP binding"/>
    <property type="evidence" value="ECO:0007669"/>
    <property type="project" value="InterPro"/>
</dbReference>
<dbReference type="Gene3D" id="3.30.62.10">
    <property type="entry name" value="Nef Regulatory Factor"/>
    <property type="match status" value="1"/>
</dbReference>
<dbReference type="InterPro" id="IPR027481">
    <property type="entry name" value="HIV-1_Nef_core_sf"/>
</dbReference>
<dbReference type="InterPro" id="IPR001558">
    <property type="entry name" value="HIV_Nef"/>
</dbReference>
<dbReference type="Pfam" id="PF00469">
    <property type="entry name" value="F-protein"/>
    <property type="match status" value="1"/>
</dbReference>
<dbReference type="SUPFAM" id="SSF55671">
    <property type="entry name" value="Regulatory factor Nef"/>
    <property type="match status" value="1"/>
</dbReference>
<organism>
    <name type="scientific">Simian immunodeficiency virus (isolate Mm142-83)</name>
    <name type="common">SIV-mac</name>
    <name type="synonym">Simian immunodeficiency virus rhesus monkey</name>
    <dbReference type="NCBI Taxonomy" id="11733"/>
    <lineage>
        <taxon>Viruses</taxon>
        <taxon>Riboviria</taxon>
        <taxon>Pararnavirae</taxon>
        <taxon>Artverviricota</taxon>
        <taxon>Revtraviricetes</taxon>
        <taxon>Ortervirales</taxon>
        <taxon>Retroviridae</taxon>
        <taxon>Orthoretrovirinae</taxon>
        <taxon>Lentivirus</taxon>
        <taxon>Simian immunodeficiency virus</taxon>
    </lineage>
</organism>
<name>NEF_SIVM1</name>
<reference key="1">
    <citation type="journal article" date="1987" name="Nature">
        <title>Sequence of simian immunodeficiency virus from macaque and its relationship to other human and simian retroviruses.</title>
        <authorList>
            <person name="Chakrabarti L."/>
            <person name="Guyader M."/>
            <person name="Alizon M."/>
            <person name="Daniel M.D."/>
            <person name="Desrosiers R.C."/>
            <person name="Tiollais P."/>
            <person name="Sonigo P."/>
        </authorList>
    </citation>
    <scope>NUCLEOTIDE SEQUENCE [GENOMIC DNA]</scope>
</reference>
<comment type="function">
    <text evidence="1">Seems to play a role in optimizing the host cell environment for viral replication without causing cell death by apoptosis. Enhances virus infectivity and pathogenicity. Probably involved in viral immune evasion mechanisms (By similarity).</text>
</comment>
<comment type="function">
    <text evidence="1">In infected CD4(+) T-lymphocytes, down-regulates cell surface expression of CD4, CD28, CD3, and MHC-I or MHC-II molecules.</text>
</comment>
<comment type="function">
    <text evidence="1">Interferes with TCR signaling from the cell membrane. Interacts with CD247/TCRZ (TCR zeta chain) and exert potent down-regulation of cell surface TCR/CD3 complexes (By similarity).</text>
</comment>
<comment type="subunit">
    <text evidence="1">Homodimer. Interacts with host CD247/TCRZ; this interaction induces down-regulation of cell surface TCR/CD3 complexes.</text>
</comment>
<comment type="subcellular location">
    <subcellularLocation>
        <location evidence="1">Host cell membrane</location>
        <topology evidence="1">Lipid-anchor</topology>
        <orientation evidence="1">Cytoplasmic side</orientation>
    </subcellularLocation>
    <text evidence="1">Associates with the inner plasma membrane through its N-terminal domain.</text>
</comment>
<comment type="domain">
    <text evidence="1">The N-terminal domain is composed of the N-myristoyl glycine and of a cluster of positively charged amino acids. It is required for inner plasma membrane targeting of Nef (By similarity).</text>
</comment>
<comment type="miscellaneous">
    <text>This is a macaque isolate.</text>
</comment>
<comment type="similarity">
    <text evidence="2">Belongs to the lentivirus primate group Nef protein family.</text>
</comment>
<accession>P05862</accession>
<keyword id="KW-1032">Host cell membrane</keyword>
<keyword id="KW-1043">Host membrane</keyword>
<keyword id="KW-0945">Host-virus interaction</keyword>
<keyword id="KW-0449">Lipoprotein</keyword>
<keyword id="KW-0472">Membrane</keyword>
<keyword id="KW-0519">Myristate</keyword>
<keyword id="KW-0899">Viral immunoevasion</keyword>
<keyword id="KW-0843">Virulence</keyword>